<dbReference type="EMBL" id="AF064448">
    <property type="protein sequence ID" value="AAC82373.1"/>
    <property type="molecule type" value="mRNA"/>
</dbReference>
<dbReference type="EMBL" id="AF178633">
    <property type="protein sequence ID" value="AAF05315.1"/>
    <property type="molecule type" value="mRNA"/>
</dbReference>
<dbReference type="EMBL" id="AB022863">
    <property type="protein sequence ID" value="BAB33298.1"/>
    <property type="molecule type" value="mRNA"/>
</dbReference>
<dbReference type="EMBL" id="AK032338">
    <property type="protein sequence ID" value="BAC27822.1"/>
    <property type="molecule type" value="mRNA"/>
</dbReference>
<dbReference type="EMBL" id="AK132692">
    <property type="protein sequence ID" value="BAE21305.1"/>
    <property type="molecule type" value="mRNA"/>
</dbReference>
<dbReference type="EMBL" id="AK145371">
    <property type="protein sequence ID" value="BAE26395.1"/>
    <property type="molecule type" value="mRNA"/>
</dbReference>
<dbReference type="EMBL" id="AK149329">
    <property type="protein sequence ID" value="BAE28816.1"/>
    <property type="molecule type" value="mRNA"/>
</dbReference>
<dbReference type="EMBL" id="AK154060">
    <property type="protein sequence ID" value="BAE32347.1"/>
    <property type="molecule type" value="mRNA"/>
</dbReference>
<dbReference type="EMBL" id="AK160393">
    <property type="protein sequence ID" value="BAE35763.1"/>
    <property type="molecule type" value="mRNA"/>
</dbReference>
<dbReference type="EMBL" id="BC068236">
    <property type="protein sequence ID" value="AAH68236.1"/>
    <property type="molecule type" value="mRNA"/>
</dbReference>
<dbReference type="EMBL" id="AK122272">
    <property type="protein sequence ID" value="BAC65554.1"/>
    <property type="molecule type" value="mRNA"/>
</dbReference>
<dbReference type="CCDS" id="CCDS23266.1"/>
<dbReference type="RefSeq" id="NP_034323.1">
    <property type="nucleotide sequence ID" value="NM_010193.4"/>
</dbReference>
<dbReference type="PDB" id="7ROY">
    <property type="method" value="X-ray"/>
    <property type="resolution" value="2.90 A"/>
    <property type="chains" value="A/B/C/D=1-377"/>
</dbReference>
<dbReference type="PDBsum" id="7ROY"/>
<dbReference type="SMR" id="Q9Z2G0"/>
<dbReference type="BioGRID" id="199631">
    <property type="interactions" value="11"/>
</dbReference>
<dbReference type="FunCoup" id="Q9Z2G0">
    <property type="interactions" value="4104"/>
</dbReference>
<dbReference type="IntAct" id="Q9Z2G0">
    <property type="interactions" value="1"/>
</dbReference>
<dbReference type="STRING" id="10090.ENSMUSP00000034775"/>
<dbReference type="iPTMnet" id="Q9Z2G0"/>
<dbReference type="PhosphoSitePlus" id="Q9Z2G0"/>
<dbReference type="PaxDb" id="10090-ENSMUSP00000034775"/>
<dbReference type="PeptideAtlas" id="Q9Z2G0"/>
<dbReference type="ProteomicsDB" id="267726"/>
<dbReference type="Pumba" id="Q9Z2G0"/>
<dbReference type="Antibodypedia" id="13914">
    <property type="antibodies" value="225 antibodies from 32 providers"/>
</dbReference>
<dbReference type="Ensembl" id="ENSMUST00000034775.10">
    <property type="protein sequence ID" value="ENSMUSP00000034775.9"/>
    <property type="gene ID" value="ENSMUSG00000032244.10"/>
</dbReference>
<dbReference type="GeneID" id="14155"/>
<dbReference type="KEGG" id="mmu:14155"/>
<dbReference type="UCSC" id="uc009qam.3">
    <property type="organism name" value="mouse"/>
</dbReference>
<dbReference type="AGR" id="MGI:1335087"/>
<dbReference type="CTD" id="10116"/>
<dbReference type="MGI" id="MGI:1335087">
    <property type="gene designation" value="Fem1b"/>
</dbReference>
<dbReference type="VEuPathDB" id="HostDB:ENSMUSG00000032244"/>
<dbReference type="eggNOG" id="KOG0508">
    <property type="taxonomic scope" value="Eukaryota"/>
</dbReference>
<dbReference type="GeneTree" id="ENSGT00940000161115"/>
<dbReference type="HOGENOM" id="CLU_020042_1_0_1"/>
<dbReference type="InParanoid" id="Q9Z2G0"/>
<dbReference type="OMA" id="ISTKTTC"/>
<dbReference type="OrthoDB" id="4429489at2759"/>
<dbReference type="PhylomeDB" id="Q9Z2G0"/>
<dbReference type="TreeFam" id="TF351376"/>
<dbReference type="Reactome" id="R-MMU-8951664">
    <property type="pathway name" value="Neddylation"/>
</dbReference>
<dbReference type="UniPathway" id="UPA00143"/>
<dbReference type="BioGRID-ORCS" id="14155">
    <property type="hits" value="2 hits in 77 CRISPR screens"/>
</dbReference>
<dbReference type="ChiTaRS" id="Fem1b">
    <property type="organism name" value="mouse"/>
</dbReference>
<dbReference type="PRO" id="PR:Q9Z2G0"/>
<dbReference type="Proteomes" id="UP000000589">
    <property type="component" value="Chromosome 9"/>
</dbReference>
<dbReference type="RNAct" id="Q9Z2G0">
    <property type="molecule type" value="protein"/>
</dbReference>
<dbReference type="Bgee" id="ENSMUSG00000032244">
    <property type="expression patterns" value="Expressed in primitive streak and 252 other cell types or tissues"/>
</dbReference>
<dbReference type="GO" id="GO:0031462">
    <property type="term" value="C:Cul2-RING ubiquitin ligase complex"/>
    <property type="evidence" value="ECO:0000250"/>
    <property type="project" value="UniProtKB"/>
</dbReference>
<dbReference type="GO" id="GO:0005737">
    <property type="term" value="C:cytoplasm"/>
    <property type="evidence" value="ECO:0000314"/>
    <property type="project" value="UniProtKB"/>
</dbReference>
<dbReference type="GO" id="GO:0005829">
    <property type="term" value="C:cytosol"/>
    <property type="evidence" value="ECO:0007669"/>
    <property type="project" value="Ensembl"/>
</dbReference>
<dbReference type="GO" id="GO:0005654">
    <property type="term" value="C:nucleoplasm"/>
    <property type="evidence" value="ECO:0007669"/>
    <property type="project" value="Ensembl"/>
</dbReference>
<dbReference type="GO" id="GO:0005634">
    <property type="term" value="C:nucleus"/>
    <property type="evidence" value="ECO:0000314"/>
    <property type="project" value="MGI"/>
</dbReference>
<dbReference type="GO" id="GO:0005123">
    <property type="term" value="F:death receptor binding"/>
    <property type="evidence" value="ECO:0007669"/>
    <property type="project" value="Ensembl"/>
</dbReference>
<dbReference type="GO" id="GO:1990756">
    <property type="term" value="F:ubiquitin-like ligase-substrate adaptor activity"/>
    <property type="evidence" value="ECO:0000314"/>
    <property type="project" value="UniProtKB"/>
</dbReference>
<dbReference type="GO" id="GO:0006915">
    <property type="term" value="P:apoptotic process"/>
    <property type="evidence" value="ECO:0007669"/>
    <property type="project" value="UniProtKB-KW"/>
</dbReference>
<dbReference type="GO" id="GO:0060442">
    <property type="term" value="P:branching involved in prostate gland morphogenesis"/>
    <property type="evidence" value="ECO:0000315"/>
    <property type="project" value="MGI"/>
</dbReference>
<dbReference type="GO" id="GO:0002070">
    <property type="term" value="P:epithelial cell maturation"/>
    <property type="evidence" value="ECO:0000315"/>
    <property type="project" value="MGI"/>
</dbReference>
<dbReference type="GO" id="GO:0060743">
    <property type="term" value="P:epithelial cell maturation involved in prostate gland development"/>
    <property type="evidence" value="ECO:0000315"/>
    <property type="project" value="MGI"/>
</dbReference>
<dbReference type="GO" id="GO:0043161">
    <property type="term" value="P:proteasome-mediated ubiquitin-dependent protein catabolic process"/>
    <property type="evidence" value="ECO:0000250"/>
    <property type="project" value="UniProtKB"/>
</dbReference>
<dbReference type="GO" id="GO:0016567">
    <property type="term" value="P:protein ubiquitination"/>
    <property type="evidence" value="ECO:0000314"/>
    <property type="project" value="MGI"/>
</dbReference>
<dbReference type="GO" id="GO:2000001">
    <property type="term" value="P:regulation of DNA damage checkpoint"/>
    <property type="evidence" value="ECO:0000250"/>
    <property type="project" value="UniProtKB"/>
</dbReference>
<dbReference type="GO" id="GO:1902041">
    <property type="term" value="P:regulation of extrinsic apoptotic signaling pathway via death domain receptors"/>
    <property type="evidence" value="ECO:0007669"/>
    <property type="project" value="Ensembl"/>
</dbReference>
<dbReference type="GO" id="GO:0140627">
    <property type="term" value="P:ubiquitin-dependent protein catabolic process via the C-end degron rule pathway"/>
    <property type="evidence" value="ECO:0000314"/>
    <property type="project" value="UniProtKB"/>
</dbReference>
<dbReference type="FunFam" id="1.25.40.20:FF:000264">
    <property type="entry name" value="Fem-1 homolog B"/>
    <property type="match status" value="1"/>
</dbReference>
<dbReference type="FunFam" id="1.25.40.20:FF:000117">
    <property type="entry name" value="Protein fem-1 homolog B"/>
    <property type="match status" value="1"/>
</dbReference>
<dbReference type="FunFam" id="1.25.40.20:FF:000202">
    <property type="entry name" value="Protein fem-1 homolog B"/>
    <property type="match status" value="1"/>
</dbReference>
<dbReference type="Gene3D" id="1.25.40.20">
    <property type="entry name" value="Ankyrin repeat-containing domain"/>
    <property type="match status" value="4"/>
</dbReference>
<dbReference type="InterPro" id="IPR002110">
    <property type="entry name" value="Ankyrin_rpt"/>
</dbReference>
<dbReference type="InterPro" id="IPR036770">
    <property type="entry name" value="Ankyrin_rpt-contain_sf"/>
</dbReference>
<dbReference type="PANTHER" id="PTHR24173">
    <property type="entry name" value="ANKYRIN REPEAT CONTAINING"/>
    <property type="match status" value="1"/>
</dbReference>
<dbReference type="PANTHER" id="PTHR24173:SF78">
    <property type="entry name" value="PROTEIN FEM-1 HOMOLOG B"/>
    <property type="match status" value="1"/>
</dbReference>
<dbReference type="Pfam" id="PF00023">
    <property type="entry name" value="Ank"/>
    <property type="match status" value="1"/>
</dbReference>
<dbReference type="Pfam" id="PF12796">
    <property type="entry name" value="Ank_2"/>
    <property type="match status" value="2"/>
</dbReference>
<dbReference type="PRINTS" id="PR01415">
    <property type="entry name" value="ANKYRIN"/>
</dbReference>
<dbReference type="SMART" id="SM00248">
    <property type="entry name" value="ANK"/>
    <property type="match status" value="8"/>
</dbReference>
<dbReference type="SUPFAM" id="SSF48403">
    <property type="entry name" value="Ankyrin repeat"/>
    <property type="match status" value="2"/>
</dbReference>
<dbReference type="PROSITE" id="PS50297">
    <property type="entry name" value="ANK_REP_REGION"/>
    <property type="match status" value="2"/>
</dbReference>
<dbReference type="PROSITE" id="PS50088">
    <property type="entry name" value="ANK_REPEAT"/>
    <property type="match status" value="6"/>
</dbReference>
<sequence length="627" mass="70223">MEGLAGYVYKAASEGKVLTLAALLLNRSESDIRYLLGYVSQQGGQRSTPLIIAARNGHAKVVRLLLEHYRVQTQQTGTVRFDGYVIDGATALWCAAGAGHFEVVKLLVSHGANVNHTTVTNSTPLRAACFDGRLDIVKYLVENNANISIANKYDNTCLMIAAYKGHTDVVRYLLEQRADPNAKAHCGATALHFAAEAGHIDIVKELIKWRAAIVVNGHGMTPLKVAAESCKADVVELLLSHADCDRRSRIEALELLGASFANDRENYDIMKTYHYLYLAMLERFQDGDNILEKEVLPPIHAYGNRTECRNPQELEAIRQDRDALHMEGLIVRERILGADNIDVSHPIIYRGAVYADNMEFEQCIKLWLHALHLRQKGNRNTHKDLLRFAQVFSQMIHLNEAVKAPDIECVLRCSVLEIEQSMNRVKNISDADVHSAMDNYECNLYTFLYLVCISTKTQCSEEDQCRINKQIYNLIHLDPRTREGFSLLHLAVNSNTPVDDFHTNDVCSFPNALVTKLLLDCGAEVNAVDNEGNSALHIIVQYNRPISDFLTLHSIIISLVEAGAHTDMTNKQNKTPLDKSTTGVSEILLKTQMKMSLKCLAARAVRANDINYQDQIPRTLEEFVGFH</sequence>
<proteinExistence type="evidence at protein level"/>
<gene>
    <name evidence="10 13" type="primary">Fem1b</name>
    <name evidence="9" type="synonym">F1aa</name>
    <name type="synonym">Kiaa0396</name>
</gene>
<keyword id="KW-0002">3D-structure</keyword>
<keyword id="KW-0040">ANK repeat</keyword>
<keyword id="KW-0053">Apoptosis</keyword>
<keyword id="KW-0963">Cytoplasm</keyword>
<keyword id="KW-0539">Nucleus</keyword>
<keyword id="KW-1185">Reference proteome</keyword>
<keyword id="KW-0677">Repeat</keyword>
<keyword id="KW-0802">TPR repeat</keyword>
<keyword id="KW-0833">Ubl conjugation pathway</keyword>
<reference key="1">
    <citation type="journal article" date="1998" name="Genomics">
        <title>The murine fem1 gene family: homologs of the Caenorhabditis elegans sex-determination protein FEM-1.</title>
        <authorList>
            <person name="Ventura-Holman T."/>
            <person name="Seldin M.F."/>
            <person name="Li W."/>
            <person name="Maher J.F."/>
        </authorList>
    </citation>
    <scope>NUCLEOTIDE SEQUENCE [MRNA]</scope>
    <scope>TISSUE SPECIFICITY</scope>
    <source>
        <strain>CD-1</strain>
        <tissue>Testis</tissue>
    </source>
</reference>
<reference key="2">
    <citation type="journal article" date="1999" name="J. Biol. Chem.">
        <title>F1Aalpha, a death receptor-binding protein homologous to the Caenorhabditis elegans sex-determining protein, FEM-1, is a caspase substrate that mediates apoptosis.</title>
        <authorList>
            <person name="Chan S.-L."/>
            <person name="Tan K.-O."/>
            <person name="Zhang L."/>
            <person name="Yee K.S.Y."/>
            <person name="Ronca F."/>
            <person name="Chan M.-Y."/>
            <person name="Yu V.C."/>
        </authorList>
    </citation>
    <scope>NUCLEOTIDE SEQUENCE [MRNA]</scope>
</reference>
<reference key="3">
    <citation type="submission" date="1999-01" db="EMBL/GenBank/DDBJ databases">
        <title>Haploid germ cell specific gene.</title>
        <authorList>
            <person name="Tanaka H."/>
            <person name="Koga M."/>
            <person name="Nishimune Y."/>
        </authorList>
    </citation>
    <scope>NUCLEOTIDE SEQUENCE [MRNA]</scope>
    <source>
        <tissue>Testis</tissue>
    </source>
</reference>
<reference key="4">
    <citation type="journal article" date="2005" name="Science">
        <title>The transcriptional landscape of the mammalian genome.</title>
        <authorList>
            <person name="Carninci P."/>
            <person name="Kasukawa T."/>
            <person name="Katayama S."/>
            <person name="Gough J."/>
            <person name="Frith M.C."/>
            <person name="Maeda N."/>
            <person name="Oyama R."/>
            <person name="Ravasi T."/>
            <person name="Lenhard B."/>
            <person name="Wells C."/>
            <person name="Kodzius R."/>
            <person name="Shimokawa K."/>
            <person name="Bajic V.B."/>
            <person name="Brenner S.E."/>
            <person name="Batalov S."/>
            <person name="Forrest A.R."/>
            <person name="Zavolan M."/>
            <person name="Davis M.J."/>
            <person name="Wilming L.G."/>
            <person name="Aidinis V."/>
            <person name="Allen J.E."/>
            <person name="Ambesi-Impiombato A."/>
            <person name="Apweiler R."/>
            <person name="Aturaliya R.N."/>
            <person name="Bailey T.L."/>
            <person name="Bansal M."/>
            <person name="Baxter L."/>
            <person name="Beisel K.W."/>
            <person name="Bersano T."/>
            <person name="Bono H."/>
            <person name="Chalk A.M."/>
            <person name="Chiu K.P."/>
            <person name="Choudhary V."/>
            <person name="Christoffels A."/>
            <person name="Clutterbuck D.R."/>
            <person name="Crowe M.L."/>
            <person name="Dalla E."/>
            <person name="Dalrymple B.P."/>
            <person name="de Bono B."/>
            <person name="Della Gatta G."/>
            <person name="di Bernardo D."/>
            <person name="Down T."/>
            <person name="Engstrom P."/>
            <person name="Fagiolini M."/>
            <person name="Faulkner G."/>
            <person name="Fletcher C.F."/>
            <person name="Fukushima T."/>
            <person name="Furuno M."/>
            <person name="Futaki S."/>
            <person name="Gariboldi M."/>
            <person name="Georgii-Hemming P."/>
            <person name="Gingeras T.R."/>
            <person name="Gojobori T."/>
            <person name="Green R.E."/>
            <person name="Gustincich S."/>
            <person name="Harbers M."/>
            <person name="Hayashi Y."/>
            <person name="Hensch T.K."/>
            <person name="Hirokawa N."/>
            <person name="Hill D."/>
            <person name="Huminiecki L."/>
            <person name="Iacono M."/>
            <person name="Ikeo K."/>
            <person name="Iwama A."/>
            <person name="Ishikawa T."/>
            <person name="Jakt M."/>
            <person name="Kanapin A."/>
            <person name="Katoh M."/>
            <person name="Kawasawa Y."/>
            <person name="Kelso J."/>
            <person name="Kitamura H."/>
            <person name="Kitano H."/>
            <person name="Kollias G."/>
            <person name="Krishnan S.P."/>
            <person name="Kruger A."/>
            <person name="Kummerfeld S.K."/>
            <person name="Kurochkin I.V."/>
            <person name="Lareau L.F."/>
            <person name="Lazarevic D."/>
            <person name="Lipovich L."/>
            <person name="Liu J."/>
            <person name="Liuni S."/>
            <person name="McWilliam S."/>
            <person name="Madan Babu M."/>
            <person name="Madera M."/>
            <person name="Marchionni L."/>
            <person name="Matsuda H."/>
            <person name="Matsuzawa S."/>
            <person name="Miki H."/>
            <person name="Mignone F."/>
            <person name="Miyake S."/>
            <person name="Morris K."/>
            <person name="Mottagui-Tabar S."/>
            <person name="Mulder N."/>
            <person name="Nakano N."/>
            <person name="Nakauchi H."/>
            <person name="Ng P."/>
            <person name="Nilsson R."/>
            <person name="Nishiguchi S."/>
            <person name="Nishikawa S."/>
            <person name="Nori F."/>
            <person name="Ohara O."/>
            <person name="Okazaki Y."/>
            <person name="Orlando V."/>
            <person name="Pang K.C."/>
            <person name="Pavan W.J."/>
            <person name="Pavesi G."/>
            <person name="Pesole G."/>
            <person name="Petrovsky N."/>
            <person name="Piazza S."/>
            <person name="Reed J."/>
            <person name="Reid J.F."/>
            <person name="Ring B.Z."/>
            <person name="Ringwald M."/>
            <person name="Rost B."/>
            <person name="Ruan Y."/>
            <person name="Salzberg S.L."/>
            <person name="Sandelin A."/>
            <person name="Schneider C."/>
            <person name="Schoenbach C."/>
            <person name="Sekiguchi K."/>
            <person name="Semple C.A."/>
            <person name="Seno S."/>
            <person name="Sessa L."/>
            <person name="Sheng Y."/>
            <person name="Shibata Y."/>
            <person name="Shimada H."/>
            <person name="Shimada K."/>
            <person name="Silva D."/>
            <person name="Sinclair B."/>
            <person name="Sperling S."/>
            <person name="Stupka E."/>
            <person name="Sugiura K."/>
            <person name="Sultana R."/>
            <person name="Takenaka Y."/>
            <person name="Taki K."/>
            <person name="Tammoja K."/>
            <person name="Tan S.L."/>
            <person name="Tang S."/>
            <person name="Taylor M.S."/>
            <person name="Tegner J."/>
            <person name="Teichmann S.A."/>
            <person name="Ueda H.R."/>
            <person name="van Nimwegen E."/>
            <person name="Verardo R."/>
            <person name="Wei C.L."/>
            <person name="Yagi K."/>
            <person name="Yamanishi H."/>
            <person name="Zabarovsky E."/>
            <person name="Zhu S."/>
            <person name="Zimmer A."/>
            <person name="Hide W."/>
            <person name="Bult C."/>
            <person name="Grimmond S.M."/>
            <person name="Teasdale R.D."/>
            <person name="Liu E.T."/>
            <person name="Brusic V."/>
            <person name="Quackenbush J."/>
            <person name="Wahlestedt C."/>
            <person name="Mattick J.S."/>
            <person name="Hume D.A."/>
            <person name="Kai C."/>
            <person name="Sasaki D."/>
            <person name="Tomaru Y."/>
            <person name="Fukuda S."/>
            <person name="Kanamori-Katayama M."/>
            <person name="Suzuki M."/>
            <person name="Aoki J."/>
            <person name="Arakawa T."/>
            <person name="Iida J."/>
            <person name="Imamura K."/>
            <person name="Itoh M."/>
            <person name="Kato T."/>
            <person name="Kawaji H."/>
            <person name="Kawagashira N."/>
            <person name="Kawashima T."/>
            <person name="Kojima M."/>
            <person name="Kondo S."/>
            <person name="Konno H."/>
            <person name="Nakano K."/>
            <person name="Ninomiya N."/>
            <person name="Nishio T."/>
            <person name="Okada M."/>
            <person name="Plessy C."/>
            <person name="Shibata K."/>
            <person name="Shiraki T."/>
            <person name="Suzuki S."/>
            <person name="Tagami M."/>
            <person name="Waki K."/>
            <person name="Watahiki A."/>
            <person name="Okamura-Oho Y."/>
            <person name="Suzuki H."/>
            <person name="Kawai J."/>
            <person name="Hayashizaki Y."/>
        </authorList>
    </citation>
    <scope>NUCLEOTIDE SEQUENCE [LARGE SCALE MRNA]</scope>
    <source>
        <strain>C57BL/6J</strain>
        <strain>NOD</strain>
        <tissue>Olfactory bulb</tissue>
        <tissue>Retina</tissue>
        <tissue>Testis</tissue>
        <tissue>Thymus</tissue>
    </source>
</reference>
<reference key="5">
    <citation type="journal article" date="2004" name="Genome Res.">
        <title>The status, quality, and expansion of the NIH full-length cDNA project: the Mammalian Gene Collection (MGC).</title>
        <authorList>
            <consortium name="The MGC Project Team"/>
        </authorList>
    </citation>
    <scope>NUCLEOTIDE SEQUENCE [LARGE SCALE MRNA]</scope>
    <source>
        <strain>C57BL/6J</strain>
        <tissue>Brain</tissue>
    </source>
</reference>
<reference key="6">
    <citation type="journal article" date="2003" name="DNA Res.">
        <title>Prediction of the coding sequences of mouse homologues of KIAA gene: II. The complete nucleotide sequences of 400 mouse KIAA-homologous cDNAs identified by screening of terminal sequences of cDNA clones randomly sampled from size-fractionated libraries.</title>
        <authorList>
            <person name="Okazaki N."/>
            <person name="Kikuno R."/>
            <person name="Ohara R."/>
            <person name="Inamoto S."/>
            <person name="Aizawa H."/>
            <person name="Yuasa S."/>
            <person name="Nakajima D."/>
            <person name="Nagase T."/>
            <person name="Ohara O."/>
            <person name="Koga H."/>
        </authorList>
    </citation>
    <scope>NUCLEOTIDE SEQUENCE [LARGE SCALE MRNA] OF 154-627</scope>
</reference>
<reference key="7">
    <citation type="journal article" date="2005" name="Biol. Reprod.">
        <title>Putative homeodomain transcription factor 1 interacts with the feminization factor homolog fem1b in male germ cells.</title>
        <authorList>
            <person name="Oyhenart J."/>
            <person name="Benichou S."/>
            <person name="Raich N."/>
        </authorList>
    </citation>
    <scope>SUBCELLULAR LOCATION</scope>
    <scope>INTERACTION WITH PHTF1</scope>
</reference>
<reference key="8">
    <citation type="journal article" date="2005" name="Mol. Cell. Biol.">
        <title>Abnormal glucose homeostasis and pancreatic islet function in mice with inactivation of the Fem1b gene.</title>
        <authorList>
            <person name="Lu D."/>
            <person name="Ventura-Holman T."/>
            <person name="Li J."/>
            <person name="McMurray R.W."/>
            <person name="Subauste J.S."/>
            <person name="Maher J.F."/>
        </authorList>
    </citation>
    <scope>FUNCTION</scope>
    <scope>TISSUE SPECIFICITY</scope>
    <scope>DISRUPTION PHENOTYPE</scope>
</reference>
<reference key="9">
    <citation type="journal article" date="2008" name="Dev. Dyn.">
        <title>Mouse Fem1b interacts with the Nkx3.1 homeoprotein and is required for proper male secondary sexual development.</title>
        <authorList>
            <person name="Wang X."/>
            <person name="Desai N."/>
            <person name="Hu Y.P."/>
            <person name="Price S.M."/>
            <person name="Abate-Shen C."/>
            <person name="Shen M.M."/>
        </authorList>
    </citation>
    <scope>DISRUPTION PHENOTYPE</scope>
    <scope>TISSUE SPECIFICITY</scope>
    <scope>INTERACTION WITH NKX3-1</scope>
</reference>
<reference key="10">
    <citation type="journal article" date="2010" name="Cell">
        <title>A tissue-specific atlas of mouse protein phosphorylation and expression.</title>
        <authorList>
            <person name="Huttlin E.L."/>
            <person name="Jedrychowski M.P."/>
            <person name="Elias J.E."/>
            <person name="Goswami T."/>
            <person name="Rad R."/>
            <person name="Beausoleil S.A."/>
            <person name="Villen J."/>
            <person name="Haas W."/>
            <person name="Sowa M.E."/>
            <person name="Gygi S.P."/>
        </authorList>
    </citation>
    <scope>IDENTIFICATION BY MASS SPECTROMETRY [LARGE SCALE ANALYSIS]</scope>
    <source>
        <tissue>Spleen</tissue>
    </source>
</reference>
<reference key="11">
    <citation type="journal article" date="2011" name="Gene">
        <title>Mouse Fem1b interacts with and induces ubiquitin-mediated degradation of Ankrd37.</title>
        <authorList>
            <person name="Shi Y.Q."/>
            <person name="Liao S.Y."/>
            <person name="Zhuang X.J."/>
            <person name="Han C.S."/>
        </authorList>
    </citation>
    <scope>FUNCTION</scope>
    <scope>SUBCELLULAR LOCATION</scope>
</reference>
<reference key="12">
    <citation type="journal article" date="2020" name="Cell">
        <title>A cellular mechanism to detect and alleviate reductive stress.</title>
        <authorList>
            <person name="Manford A.G."/>
            <person name="Rodriguez-Perez F."/>
            <person name="Shih K.Y."/>
            <person name="Shi Z."/>
            <person name="Berdan C.A."/>
            <person name="Choe M."/>
            <person name="Titov D.V."/>
            <person name="Nomura D.K."/>
            <person name="Rape M."/>
        </authorList>
    </citation>
    <scope>FUNCTION</scope>
    <scope>PATHWAY</scope>
    <scope>IDENTIFICATION IN A CRL2 E3 UBIQUITIN-PROTEIN LIGASE COMPLEX</scope>
    <scope>MUTAGENESIS OF CYS-186 AND LEU-597</scope>
</reference>
<reference evidence="14" key="13">
    <citation type="journal article" date="2021" name="Cell">
        <title>Structural basis and regulation of the reductive stress response.</title>
        <authorList>
            <person name="Manford A.G."/>
            <person name="Mena E.L."/>
            <person name="Shih K.Y."/>
            <person name="Gee C.L."/>
            <person name="McMinimy R."/>
            <person name="Martinez-Gonzalez B."/>
            <person name="Sherriff R."/>
            <person name="Lew B."/>
            <person name="Zoltek M."/>
            <person name="Rodriguez-Perez F."/>
            <person name="Woldesenbet M."/>
            <person name="Kuriyan J."/>
            <person name="Rape M."/>
        </authorList>
    </citation>
    <scope>X-RAY CRYSTALLOGRAPHY (2.90 ANGSTROMS) OF 1-377 IN COMPLEX WITH ZINC AND FNIP1</scope>
    <scope>FUNCTION</scope>
    <scope>PATHWAY</scope>
    <scope>ACTIVITY REGULATION</scope>
    <scope>ZINC-BINDING</scope>
    <scope>MUTAGENESIS OF ARG-126</scope>
</reference>
<feature type="chain" id="PRO_0000324531" description="Protein fem-1 homolog B">
    <location>
        <begin position="1"/>
        <end position="627"/>
    </location>
</feature>
<feature type="repeat" description="ANK 1">
    <location>
        <begin position="45"/>
        <end position="74"/>
    </location>
</feature>
<feature type="repeat" description="ANK 2">
    <location>
        <begin position="87"/>
        <end position="116"/>
    </location>
</feature>
<feature type="repeat" description="ANK 3">
    <location>
        <begin position="120"/>
        <end position="149"/>
    </location>
</feature>
<feature type="repeat" description="ANK 4">
    <location>
        <begin position="153"/>
        <end position="182"/>
    </location>
</feature>
<feature type="repeat" description="ANK 5">
    <location>
        <begin position="186"/>
        <end position="215"/>
    </location>
</feature>
<feature type="repeat" description="ANK 6">
    <location>
        <begin position="218"/>
        <end position="248"/>
    </location>
</feature>
<feature type="repeat" description="TPR">
    <location>
        <begin position="344"/>
        <end position="377"/>
    </location>
</feature>
<feature type="repeat" description="ANK 7">
    <location>
        <begin position="483"/>
        <end position="527"/>
    </location>
</feature>
<feature type="repeat" description="ANK 8">
    <location>
        <begin position="531"/>
        <end position="568"/>
    </location>
</feature>
<feature type="binding site" evidence="7 14">
    <location>
        <position position="185"/>
    </location>
    <ligand>
        <name>Zn(2+)</name>
        <dbReference type="ChEBI" id="CHEBI:29105"/>
        <label>1</label>
        <note>ligand shared with FNIP1</note>
    </ligand>
</feature>
<feature type="binding site" evidence="7 14">
    <location>
        <position position="186"/>
    </location>
    <ligand>
        <name>Zn(2+)</name>
        <dbReference type="ChEBI" id="CHEBI:29105"/>
        <label>2</label>
        <note>ligand shared with FNIP1</note>
    </ligand>
</feature>
<feature type="binding site" evidence="7">
    <location>
        <position position="186"/>
    </location>
    <ligand>
        <name>Zn(2+)</name>
        <dbReference type="ChEBI" id="CHEBI:29105"/>
        <note>ligand shared with BEX proteins</note>
    </ligand>
</feature>
<feature type="binding site" evidence="7 14">
    <location>
        <position position="218"/>
    </location>
    <ligand>
        <name>Zn(2+)</name>
        <dbReference type="ChEBI" id="CHEBI:29105"/>
        <label>2</label>
        <note>ligand shared with FNIP1</note>
    </ligand>
</feature>
<feature type="site" description="Cleavage; by a caspase-3-like protease" evidence="1">
    <location>
        <begin position="342"/>
        <end position="343"/>
    </location>
</feature>
<feature type="mutagenesis site" description="Abolished association with BEX family proteins (BEX1, BEX2, BEX3 and/or BEX4), leading to constitutive ubiquitination of FNIP1." evidence="7">
    <original>R</original>
    <variation>A</variation>
    <variation>Q</variation>
    <location>
        <position position="126"/>
    </location>
</feature>
<feature type="mutagenesis site" description="Abolished ability to promote ubiquitination of reduced FNIP1." evidence="6">
    <original>C</original>
    <variation>S</variation>
    <location>
        <position position="186"/>
    </location>
</feature>
<feature type="mutagenesis site" description="Abolished ability to promote ubiquitination of reduced FNIP1." evidence="6">
    <original>L</original>
    <variation>A</variation>
    <location>
        <position position="597"/>
    </location>
</feature>
<feature type="sequence conflict" description="In Ref. 4; BAE21305." evidence="12" ref="4">
    <original>A</original>
    <variation>V</variation>
    <location>
        <position position="184"/>
    </location>
</feature>
<feature type="sequence conflict" description="In Ref. 2; AAF05315." evidence="12" ref="2">
    <original>D</original>
    <variation>G</variation>
    <location>
        <position position="201"/>
    </location>
</feature>
<feature type="sequence conflict" description="In Ref. 3; BAB33298." evidence="12" ref="3">
    <original>L</original>
    <variation>R</variation>
    <location>
        <position position="513"/>
    </location>
</feature>
<feature type="sequence conflict" description="In Ref. 2; AAF05315." evidence="12" ref="2">
    <original>V</original>
    <variation>A</variation>
    <location>
        <position position="540"/>
    </location>
</feature>
<feature type="helix" evidence="15">
    <location>
        <begin position="1"/>
        <end position="13"/>
    </location>
</feature>
<feature type="helix" evidence="15">
    <location>
        <begin position="17"/>
        <end position="24"/>
    </location>
</feature>
<feature type="helix" evidence="15">
    <location>
        <begin position="29"/>
        <end position="36"/>
    </location>
</feature>
<feature type="strand" evidence="15">
    <location>
        <begin position="40"/>
        <end position="42"/>
    </location>
</feature>
<feature type="strand" evidence="15">
    <location>
        <begin position="45"/>
        <end position="47"/>
    </location>
</feature>
<feature type="helix" evidence="15">
    <location>
        <begin position="49"/>
        <end position="56"/>
    </location>
</feature>
<feature type="helix" evidence="15">
    <location>
        <begin position="59"/>
        <end position="69"/>
    </location>
</feature>
<feature type="strand" evidence="15">
    <location>
        <begin position="76"/>
        <end position="81"/>
    </location>
</feature>
<feature type="strand" evidence="15">
    <location>
        <begin position="84"/>
        <end position="90"/>
    </location>
</feature>
<feature type="helix" evidence="15">
    <location>
        <begin position="91"/>
        <end position="98"/>
    </location>
</feature>
<feature type="helix" evidence="15">
    <location>
        <begin position="101"/>
        <end position="109"/>
    </location>
</feature>
<feature type="helix" evidence="15">
    <location>
        <begin position="124"/>
        <end position="131"/>
    </location>
</feature>
<feature type="helix" evidence="15">
    <location>
        <begin position="134"/>
        <end position="142"/>
    </location>
</feature>
<feature type="helix" evidence="15">
    <location>
        <begin position="157"/>
        <end position="164"/>
    </location>
</feature>
<feature type="helix" evidence="15">
    <location>
        <begin position="167"/>
        <end position="175"/>
    </location>
</feature>
<feature type="helix" evidence="15">
    <location>
        <begin position="190"/>
        <end position="196"/>
    </location>
</feature>
<feature type="helix" evidence="15">
    <location>
        <begin position="200"/>
        <end position="208"/>
    </location>
</feature>
<feature type="helix" evidence="15">
    <location>
        <begin position="222"/>
        <end position="228"/>
    </location>
</feature>
<feature type="helix" evidence="15">
    <location>
        <begin position="232"/>
        <end position="239"/>
    </location>
</feature>
<feature type="strand" evidence="15">
    <location>
        <begin position="241"/>
        <end position="244"/>
    </location>
</feature>
<feature type="helix" evidence="15">
    <location>
        <begin position="246"/>
        <end position="259"/>
    </location>
</feature>
<feature type="turn" evidence="15">
    <location>
        <begin position="260"/>
        <end position="262"/>
    </location>
</feature>
<feature type="strand" evidence="15">
    <location>
        <begin position="264"/>
        <end position="266"/>
    </location>
</feature>
<feature type="helix" evidence="15">
    <location>
        <begin position="269"/>
        <end position="283"/>
    </location>
</feature>
<feature type="strand" evidence="15">
    <location>
        <begin position="284"/>
        <end position="289"/>
    </location>
</feature>
<feature type="turn" evidence="15">
    <location>
        <begin position="300"/>
        <end position="304"/>
    </location>
</feature>
<feature type="helix" evidence="15">
    <location>
        <begin position="311"/>
        <end position="316"/>
    </location>
</feature>
<feature type="turn" evidence="15">
    <location>
        <begin position="317"/>
        <end position="319"/>
    </location>
</feature>
<feature type="helix" evidence="15">
    <location>
        <begin position="321"/>
        <end position="336"/>
    </location>
</feature>
<feature type="helix" evidence="15">
    <location>
        <begin position="345"/>
        <end position="356"/>
    </location>
</feature>
<feature type="helix" evidence="15">
    <location>
        <begin position="360"/>
        <end position="372"/>
    </location>
</feature>
<protein>
    <recommendedName>
        <fullName evidence="12">Protein fem-1 homolog B</fullName>
        <shortName evidence="10">FEM1b</shortName>
    </recommendedName>
    <alternativeName>
        <fullName>FEM1-beta</fullName>
    </alternativeName>
    <alternativeName>
        <fullName evidence="9">Fem-1-like death receptor-binding protein alpha</fullName>
    </alternativeName>
    <alternativeName>
        <fullName evidence="9">Fem-1-like in apoptotic pathway protein alpha</fullName>
        <shortName evidence="9">F1A-alpha</shortName>
    </alternativeName>
    <alternativeName>
        <fullName evidence="11">mt-Fem</fullName>
    </alternativeName>
</protein>
<name>FEM1B_MOUSE</name>
<organism>
    <name type="scientific">Mus musculus</name>
    <name type="common">Mouse</name>
    <dbReference type="NCBI Taxonomy" id="10090"/>
    <lineage>
        <taxon>Eukaryota</taxon>
        <taxon>Metazoa</taxon>
        <taxon>Chordata</taxon>
        <taxon>Craniata</taxon>
        <taxon>Vertebrata</taxon>
        <taxon>Euteleostomi</taxon>
        <taxon>Mammalia</taxon>
        <taxon>Eutheria</taxon>
        <taxon>Euarchontoglires</taxon>
        <taxon>Glires</taxon>
        <taxon>Rodentia</taxon>
        <taxon>Myomorpha</taxon>
        <taxon>Muroidea</taxon>
        <taxon>Muridae</taxon>
        <taxon>Murinae</taxon>
        <taxon>Mus</taxon>
        <taxon>Mus</taxon>
    </lineage>
</organism>
<evidence type="ECO:0000250" key="1">
    <source>
        <dbReference type="UniProtKB" id="Q9UK73"/>
    </source>
</evidence>
<evidence type="ECO:0000269" key="2">
    <source>
    </source>
</evidence>
<evidence type="ECO:0000269" key="3">
    <source>
    </source>
</evidence>
<evidence type="ECO:0000269" key="4">
    <source>
    </source>
</evidence>
<evidence type="ECO:0000269" key="5">
    <source>
    </source>
</evidence>
<evidence type="ECO:0000269" key="6">
    <source>
    </source>
</evidence>
<evidence type="ECO:0000269" key="7">
    <source>
    </source>
</evidence>
<evidence type="ECO:0000269" key="8">
    <source>
    </source>
</evidence>
<evidence type="ECO:0000303" key="9">
    <source>
    </source>
</evidence>
<evidence type="ECO:0000303" key="10">
    <source>
    </source>
</evidence>
<evidence type="ECO:0000303" key="11">
    <source ref="3"/>
</evidence>
<evidence type="ECO:0000305" key="12"/>
<evidence type="ECO:0000312" key="13">
    <source>
        <dbReference type="MGI" id="MGI:1335087"/>
    </source>
</evidence>
<evidence type="ECO:0007744" key="14">
    <source>
        <dbReference type="PDB" id="7ROY"/>
    </source>
</evidence>
<evidence type="ECO:0007829" key="15">
    <source>
        <dbReference type="PDB" id="7ROY"/>
    </source>
</evidence>
<comment type="function">
    <text evidence="1 3 5 6 7">Substrate-recognition component of a Cul2-RING (CRL2) E3 ubiquitin-protein ligase complex of the DesCEND (destruction via C-end degrons) pathway, which recognizes a C-degron located at the extreme C terminus of target proteins, leading to their ubiquitination and degradation (By similarity). The C-degron recognized by the DesCEND pathway is usually a motif of less than ten residues and can be present in full-length proteins, truncated proteins or proteolytically cleaved forms (By similarity). The CRL2(FEM1B) complex specifically recognizes proteins ending with -Gly-Leu-Asp-Arg, such as CDK5R1, leading to their ubiquitination and degradation (By similarity). Also acts as a regulator of the reductive stress response by mediating ubiquitination of reduced FNIP1: in response to reductive stress, the CRL2(FEM1B) complex specifically recognizes a conserved Cys degron in FNIP1 when this degron is reduced, leading to FNIP1 degradation and subsequent activation of mitochondria to recalibrate reactive oxygen species (ROS) (PubMed:32941802, PubMed:34562363). Mechanistically, recognizes and binds reduced FNIP1 through two interface zinc ions, which act as a molecular glue that recruit reduced FNIP1 to FEM1B (PubMed:34562363). Promotes ubiquitination of GLI1, suppressing GLI1 transcriptional activator activity (By similarity). Promotes ubiquitination and degradation of ANKRD37 (PubMed:21723927). Promotes ubiquitination and degradation of SLBP (By similarity). Involved in apoptosis by acting as a death receptor-associated protein that mediates apoptosis (By similarity). Also involved in glucose homeostasis in pancreatic islet (PubMed:16024793). May also act as an adapter/mediator in replication stress-induced signaling that leads to the activation of CHEK1 (By similarity).</text>
</comment>
<comment type="activity regulation">
    <text evidence="7">Activity of the CRL2(FEM1B) complex toward FNIP1 is inhibited by BEX family proteins (BEX1, BEX2, BEX3 and/or BEX4) in absence of reductive stress (PubMed:34562363). Mechanistically, BEX proteins act as pseudosubstrate inhibitors that associate with FEM1B via zinc in absence of reductive stress, thereby preventing association between FEM1B and FNIP1 (PubMed:34562363).</text>
</comment>
<comment type="pathway">
    <text evidence="6 7">Protein modification; protein ubiquitination.</text>
</comment>
<comment type="subunit">
    <text evidence="1 2 4 6">Component of a CRL2 E3 ubiquitin-protein ligase complex, also named ECS (Elongin BC-CUL2/5-SOCS-box protein) complex, composed of CUL2, Elongin BC (ELOB and ELOC), RBX1 and substrate-specific adapter FEM1B (PubMed:32941802). Homooligomer (By similarity). Interacts with PPM1F and PHTF1 (PubMed:15601915). Interacts with the death domain of FAS/TNFRSF6 and TNFRSF1A. Interacts with CHEK1 (By similarity). Interacts with NKX3-1 (PubMed:18816836).</text>
</comment>
<comment type="subcellular location">
    <subcellularLocation>
        <location evidence="2 5">Cytoplasm</location>
    </subcellularLocation>
    <subcellularLocation>
        <location evidence="1">Nucleus</location>
    </subcellularLocation>
    <text evidence="1">In the nucleus, the protein level increased slightly after camptothecin (CPT) treatment. Associated with chromatin.</text>
</comment>
<comment type="tissue specificity">
    <text evidence="3 4 8">Expressed in pancreatic islets, within both beta cells and non-beta cells (at protein level) (PubMed:16024793). Highly expressed in adult testis; expressed in all types of spermatogonia (PubMed:18816836, PubMed:9828124). Also expressed in the prostate of neonatal mice (PubMed:18816836).</text>
</comment>
<comment type="disruption phenotype">
    <text evidence="3 4">Abnormal glucose tolerance predominantly due to defective glucose-stimulated insulin secretion (PubMed:16024793). Mice also show defects in prostate ductal morphogenesis and secretory protein expression (PubMed:18816836).</text>
</comment>
<comment type="similarity">
    <text evidence="12">Belongs to the fem-1 family.</text>
</comment>
<accession>Q9Z2G0</accession>
<accession>Q3TV57</accession>
<accession>Q3ULQ3</accession>
<accession>Q3V148</accession>
<accession>Q80U13</accession>
<accession>Q99NC9</accession>
<accession>Q9QZL3</accession>